<keyword id="KW-0687">Ribonucleoprotein</keyword>
<keyword id="KW-0689">Ribosomal protein</keyword>
<keyword id="KW-0694">RNA-binding</keyword>
<keyword id="KW-0699">rRNA-binding</keyword>
<sequence>MSRVGKKPVVVPSGVTASVQGQIVTMKGPKGQLQFIVHDDVEVQFENGSVTVKPRVETNRARALYGTARAQVANLLEGVTKGFEKKLDITGVGYRAALQGKKLQLALGYSHDVVYDIPDGITITVPKPTEIFISGNDSQRVGQVAAEIRSYRPPEPYKGKGVRYSDEFIFRKEGKKK</sequence>
<proteinExistence type="inferred from homology"/>
<dbReference type="EMBL" id="CP000301">
    <property type="protein sequence ID" value="ABD88973.1"/>
    <property type="molecule type" value="Genomic_DNA"/>
</dbReference>
<dbReference type="SMR" id="Q211G3"/>
<dbReference type="STRING" id="316056.RPC_3433"/>
<dbReference type="KEGG" id="rpc:RPC_3433"/>
<dbReference type="eggNOG" id="COG0097">
    <property type="taxonomic scope" value="Bacteria"/>
</dbReference>
<dbReference type="HOGENOM" id="CLU_065464_1_2_5"/>
<dbReference type="OrthoDB" id="9805007at2"/>
<dbReference type="GO" id="GO:0022625">
    <property type="term" value="C:cytosolic large ribosomal subunit"/>
    <property type="evidence" value="ECO:0007669"/>
    <property type="project" value="TreeGrafter"/>
</dbReference>
<dbReference type="GO" id="GO:0019843">
    <property type="term" value="F:rRNA binding"/>
    <property type="evidence" value="ECO:0007669"/>
    <property type="project" value="UniProtKB-UniRule"/>
</dbReference>
<dbReference type="GO" id="GO:0003735">
    <property type="term" value="F:structural constituent of ribosome"/>
    <property type="evidence" value="ECO:0007669"/>
    <property type="project" value="InterPro"/>
</dbReference>
<dbReference type="GO" id="GO:0002181">
    <property type="term" value="P:cytoplasmic translation"/>
    <property type="evidence" value="ECO:0007669"/>
    <property type="project" value="TreeGrafter"/>
</dbReference>
<dbReference type="FunFam" id="3.90.930.12:FF:000001">
    <property type="entry name" value="50S ribosomal protein L6"/>
    <property type="match status" value="1"/>
</dbReference>
<dbReference type="FunFam" id="3.90.930.12:FF:000002">
    <property type="entry name" value="50S ribosomal protein L6"/>
    <property type="match status" value="1"/>
</dbReference>
<dbReference type="Gene3D" id="3.90.930.12">
    <property type="entry name" value="Ribosomal protein L6, alpha-beta domain"/>
    <property type="match status" value="2"/>
</dbReference>
<dbReference type="HAMAP" id="MF_01365_B">
    <property type="entry name" value="Ribosomal_uL6_B"/>
    <property type="match status" value="1"/>
</dbReference>
<dbReference type="InterPro" id="IPR000702">
    <property type="entry name" value="Ribosomal_uL6-like"/>
</dbReference>
<dbReference type="InterPro" id="IPR036789">
    <property type="entry name" value="Ribosomal_uL6-like_a/b-dom_sf"/>
</dbReference>
<dbReference type="InterPro" id="IPR020040">
    <property type="entry name" value="Ribosomal_uL6_a/b-dom"/>
</dbReference>
<dbReference type="InterPro" id="IPR019906">
    <property type="entry name" value="Ribosomal_uL6_bac-type"/>
</dbReference>
<dbReference type="InterPro" id="IPR002358">
    <property type="entry name" value="Ribosomal_uL6_CS"/>
</dbReference>
<dbReference type="NCBIfam" id="TIGR03654">
    <property type="entry name" value="L6_bact"/>
    <property type="match status" value="1"/>
</dbReference>
<dbReference type="PANTHER" id="PTHR11655">
    <property type="entry name" value="60S/50S RIBOSOMAL PROTEIN L6/L9"/>
    <property type="match status" value="1"/>
</dbReference>
<dbReference type="PANTHER" id="PTHR11655:SF14">
    <property type="entry name" value="LARGE RIBOSOMAL SUBUNIT PROTEIN UL6M"/>
    <property type="match status" value="1"/>
</dbReference>
<dbReference type="Pfam" id="PF00347">
    <property type="entry name" value="Ribosomal_L6"/>
    <property type="match status" value="2"/>
</dbReference>
<dbReference type="PIRSF" id="PIRSF002162">
    <property type="entry name" value="Ribosomal_L6"/>
    <property type="match status" value="1"/>
</dbReference>
<dbReference type="PRINTS" id="PR00059">
    <property type="entry name" value="RIBOSOMALL6"/>
</dbReference>
<dbReference type="SUPFAM" id="SSF56053">
    <property type="entry name" value="Ribosomal protein L6"/>
    <property type="match status" value="2"/>
</dbReference>
<dbReference type="PROSITE" id="PS00525">
    <property type="entry name" value="RIBOSOMAL_L6_1"/>
    <property type="match status" value="1"/>
</dbReference>
<organism>
    <name type="scientific">Rhodopseudomonas palustris (strain BisB18)</name>
    <dbReference type="NCBI Taxonomy" id="316056"/>
    <lineage>
        <taxon>Bacteria</taxon>
        <taxon>Pseudomonadati</taxon>
        <taxon>Pseudomonadota</taxon>
        <taxon>Alphaproteobacteria</taxon>
        <taxon>Hyphomicrobiales</taxon>
        <taxon>Nitrobacteraceae</taxon>
        <taxon>Rhodopseudomonas</taxon>
    </lineage>
</organism>
<feature type="chain" id="PRO_0000260928" description="Large ribosomal subunit protein uL6">
    <location>
        <begin position="1"/>
        <end position="177"/>
    </location>
</feature>
<evidence type="ECO:0000255" key="1">
    <source>
        <dbReference type="HAMAP-Rule" id="MF_01365"/>
    </source>
</evidence>
<evidence type="ECO:0000305" key="2"/>
<name>RL6_RHOPB</name>
<reference key="1">
    <citation type="submission" date="2006-03" db="EMBL/GenBank/DDBJ databases">
        <title>Complete sequence of Rhodopseudomonas palustris BisB18.</title>
        <authorList>
            <consortium name="US DOE Joint Genome Institute"/>
            <person name="Copeland A."/>
            <person name="Lucas S."/>
            <person name="Lapidus A."/>
            <person name="Barry K."/>
            <person name="Detter J.C."/>
            <person name="Glavina del Rio T."/>
            <person name="Hammon N."/>
            <person name="Israni S."/>
            <person name="Dalin E."/>
            <person name="Tice H."/>
            <person name="Pitluck S."/>
            <person name="Chain P."/>
            <person name="Malfatti S."/>
            <person name="Shin M."/>
            <person name="Vergez L."/>
            <person name="Schmutz J."/>
            <person name="Larimer F."/>
            <person name="Land M."/>
            <person name="Hauser L."/>
            <person name="Pelletier D.A."/>
            <person name="Kyrpides N."/>
            <person name="Anderson I."/>
            <person name="Oda Y."/>
            <person name="Harwood C.S."/>
            <person name="Richardson P."/>
        </authorList>
    </citation>
    <scope>NUCLEOTIDE SEQUENCE [LARGE SCALE GENOMIC DNA]</scope>
    <source>
        <strain>BisB18</strain>
    </source>
</reference>
<gene>
    <name evidence="1" type="primary">rplF</name>
    <name type="ordered locus">RPC_3433</name>
</gene>
<accession>Q211G3</accession>
<comment type="function">
    <text evidence="1">This protein binds to the 23S rRNA, and is important in its secondary structure. It is located near the subunit interface in the base of the L7/L12 stalk, and near the tRNA binding site of the peptidyltransferase center.</text>
</comment>
<comment type="subunit">
    <text evidence="1">Part of the 50S ribosomal subunit.</text>
</comment>
<comment type="similarity">
    <text evidence="1">Belongs to the universal ribosomal protein uL6 family.</text>
</comment>
<protein>
    <recommendedName>
        <fullName evidence="1">Large ribosomal subunit protein uL6</fullName>
    </recommendedName>
    <alternativeName>
        <fullName evidence="2">50S ribosomal protein L6</fullName>
    </alternativeName>
</protein>